<evidence type="ECO:0000250" key="1">
    <source>
        <dbReference type="UniProtKB" id="Q9ESE1"/>
    </source>
</evidence>
<evidence type="ECO:0000255" key="2"/>
<evidence type="ECO:0000255" key="3">
    <source>
        <dbReference type="PROSITE-ProRule" id="PRU00026"/>
    </source>
</evidence>
<evidence type="ECO:0000255" key="4">
    <source>
        <dbReference type="PROSITE-ProRule" id="PRU01119"/>
    </source>
</evidence>
<evidence type="ECO:0000256" key="5">
    <source>
        <dbReference type="SAM" id="MobiDB-lite"/>
    </source>
</evidence>
<evidence type="ECO:0000269" key="6">
    <source>
    </source>
</evidence>
<evidence type="ECO:0000269" key="7">
    <source>
    </source>
</evidence>
<evidence type="ECO:0000269" key="8">
    <source>
    </source>
</evidence>
<evidence type="ECO:0000269" key="9">
    <source>
    </source>
</evidence>
<evidence type="ECO:0000269" key="10">
    <source>
    </source>
</evidence>
<evidence type="ECO:0000303" key="11">
    <source>
    </source>
</evidence>
<evidence type="ECO:0000303" key="12">
    <source>
    </source>
</evidence>
<evidence type="ECO:0000303" key="13">
    <source>
    </source>
</evidence>
<evidence type="ECO:0000303" key="14">
    <source>
    </source>
</evidence>
<evidence type="ECO:0000305" key="15"/>
<evidence type="ECO:0000305" key="16">
    <source>
    </source>
</evidence>
<evidence type="ECO:0000312" key="17">
    <source>
        <dbReference type="HGNC" id="HGNC:1742"/>
    </source>
</evidence>
<evidence type="ECO:0007744" key="18">
    <source>
    </source>
</evidence>
<evidence type="ECO:0007744" key="19">
    <source>
    </source>
</evidence>
<evidence type="ECO:0007744" key="20">
    <source>
    </source>
</evidence>
<evidence type="ECO:0007744" key="21">
    <source>
    </source>
</evidence>
<evidence type="ECO:0007744" key="22">
    <source>
    </source>
</evidence>
<evidence type="ECO:0007744" key="23">
    <source>
    </source>
</evidence>
<evidence type="ECO:0007829" key="24">
    <source>
        <dbReference type="PDB" id="1T77"/>
    </source>
</evidence>
<organism>
    <name type="scientific">Homo sapiens</name>
    <name type="common">Human</name>
    <dbReference type="NCBI Taxonomy" id="9606"/>
    <lineage>
        <taxon>Eukaryota</taxon>
        <taxon>Metazoa</taxon>
        <taxon>Chordata</taxon>
        <taxon>Craniata</taxon>
        <taxon>Vertebrata</taxon>
        <taxon>Euteleostomi</taxon>
        <taxon>Mammalia</taxon>
        <taxon>Eutheria</taxon>
        <taxon>Euarchontoglires</taxon>
        <taxon>Primates</taxon>
        <taxon>Haplorrhini</taxon>
        <taxon>Catarrhini</taxon>
        <taxon>Hominidae</taxon>
        <taxon>Homo</taxon>
    </lineage>
</organism>
<dbReference type="EMBL" id="AF216648">
    <property type="protein sequence ID" value="AAG48558.2"/>
    <property type="molecule type" value="mRNA"/>
</dbReference>
<dbReference type="EMBL" id="AF217149">
    <property type="protein sequence ID" value="AAG48559.1"/>
    <property type="molecule type" value="mRNA"/>
</dbReference>
<dbReference type="EMBL" id="AF467287">
    <property type="protein sequence ID" value="AAM53530.1"/>
    <property type="molecule type" value="mRNA"/>
</dbReference>
<dbReference type="EMBL" id="AC092544">
    <property type="status" value="NOT_ANNOTATED_CDS"/>
    <property type="molecule type" value="Genomic_DNA"/>
</dbReference>
<dbReference type="EMBL" id="AC092612">
    <property type="status" value="NOT_ANNOTATED_CDS"/>
    <property type="molecule type" value="Genomic_DNA"/>
</dbReference>
<dbReference type="EMBL" id="AC093748">
    <property type="protein sequence ID" value="AAY40984.1"/>
    <property type="molecule type" value="Genomic_DNA"/>
</dbReference>
<dbReference type="EMBL" id="AC097373">
    <property type="protein sequence ID" value="AAY40973.1"/>
    <property type="molecule type" value="Genomic_DNA"/>
</dbReference>
<dbReference type="EMBL" id="AC104796">
    <property type="status" value="NOT_ANNOTATED_CDS"/>
    <property type="molecule type" value="Genomic_DNA"/>
</dbReference>
<dbReference type="EMBL" id="AC110813">
    <property type="status" value="NOT_ANNOTATED_CDS"/>
    <property type="molecule type" value="Genomic_DNA"/>
</dbReference>
<dbReference type="EMBL" id="M83822">
    <property type="protein sequence ID" value="AAB09603.1"/>
    <property type="status" value="ALT_FRAME"/>
    <property type="molecule type" value="mRNA"/>
</dbReference>
<dbReference type="CCDS" id="CCDS3773.1">
    <molecule id="P50851-1"/>
</dbReference>
<dbReference type="CCDS" id="CCDS58928.1">
    <molecule id="P50851-2"/>
</dbReference>
<dbReference type="RefSeq" id="NP_001186211.2">
    <molecule id="P50851-2"/>
    <property type="nucleotide sequence ID" value="NM_001199282.2"/>
</dbReference>
<dbReference type="RefSeq" id="NP_006717.2">
    <molecule id="P50851-1"/>
    <property type="nucleotide sequence ID" value="NM_006726.4"/>
</dbReference>
<dbReference type="RefSeq" id="XP_011530736.1">
    <molecule id="P50851-1"/>
    <property type="nucleotide sequence ID" value="XM_011532434.3"/>
</dbReference>
<dbReference type="PDB" id="1T77">
    <property type="method" value="X-ray"/>
    <property type="resolution" value="2.40 A"/>
    <property type="chains" value="A/B/C/D=2076-2489"/>
</dbReference>
<dbReference type="PDBsum" id="1T77"/>
<dbReference type="SMR" id="P50851"/>
<dbReference type="BioGRID" id="107423">
    <property type="interactions" value="187"/>
</dbReference>
<dbReference type="DIP" id="DIP-50531N"/>
<dbReference type="FunCoup" id="P50851">
    <property type="interactions" value="2160"/>
</dbReference>
<dbReference type="IntAct" id="P50851">
    <property type="interactions" value="85"/>
</dbReference>
<dbReference type="MINT" id="P50851"/>
<dbReference type="STRING" id="9606.ENSP00000349629"/>
<dbReference type="GlyCosmos" id="P50851">
    <property type="glycosylation" value="2 sites, 1 glycan"/>
</dbReference>
<dbReference type="GlyGen" id="P50851">
    <property type="glycosylation" value="8 sites, 1 N-linked glycan (1 site), 1 O-linked glycan (4 sites)"/>
</dbReference>
<dbReference type="iPTMnet" id="P50851"/>
<dbReference type="MetOSite" id="P50851"/>
<dbReference type="PhosphoSitePlus" id="P50851"/>
<dbReference type="SwissPalm" id="P50851"/>
<dbReference type="BioMuta" id="LRBA"/>
<dbReference type="DMDM" id="259016388"/>
<dbReference type="jPOST" id="P50851"/>
<dbReference type="MassIVE" id="P50851"/>
<dbReference type="PaxDb" id="9606-ENSP00000349629"/>
<dbReference type="PeptideAtlas" id="P50851"/>
<dbReference type="ProteomicsDB" id="56265">
    <molecule id="P50851-1"/>
</dbReference>
<dbReference type="ProteomicsDB" id="56266">
    <molecule id="P50851-2"/>
</dbReference>
<dbReference type="Pumba" id="P50851"/>
<dbReference type="Antibodypedia" id="16513">
    <property type="antibodies" value="67 antibodies from 18 providers"/>
</dbReference>
<dbReference type="DNASU" id="987"/>
<dbReference type="Ensembl" id="ENST00000357115.9">
    <molecule id="P50851-1"/>
    <property type="protein sequence ID" value="ENSP00000349629.3"/>
    <property type="gene ID" value="ENSG00000198589.15"/>
</dbReference>
<dbReference type="Ensembl" id="ENST00000510413.5">
    <molecule id="P50851-2"/>
    <property type="protein sequence ID" value="ENSP00000421552.1"/>
    <property type="gene ID" value="ENSG00000198589.15"/>
</dbReference>
<dbReference type="GeneID" id="987"/>
<dbReference type="KEGG" id="hsa:987"/>
<dbReference type="UCSC" id="uc003ilu.5">
    <molecule id="P50851-1"/>
    <property type="organism name" value="human"/>
</dbReference>
<dbReference type="AGR" id="HGNC:1742"/>
<dbReference type="CTD" id="987"/>
<dbReference type="DisGeNET" id="987"/>
<dbReference type="GeneCards" id="LRBA"/>
<dbReference type="HGNC" id="HGNC:1742">
    <property type="gene designation" value="LRBA"/>
</dbReference>
<dbReference type="HPA" id="ENSG00000198589">
    <property type="expression patterns" value="Low tissue specificity"/>
</dbReference>
<dbReference type="MalaCards" id="LRBA"/>
<dbReference type="MIM" id="606453">
    <property type="type" value="gene"/>
</dbReference>
<dbReference type="MIM" id="614700">
    <property type="type" value="phenotype"/>
</dbReference>
<dbReference type="neXtProt" id="NX_P50851"/>
<dbReference type="OpenTargets" id="ENSG00000198589"/>
<dbReference type="Orphanet" id="445018">
    <property type="disease" value="Combined immunodeficiency due to LRBA deficiency"/>
</dbReference>
<dbReference type="PharmGKB" id="PA30444"/>
<dbReference type="VEuPathDB" id="HostDB:ENSG00000198589"/>
<dbReference type="eggNOG" id="KOG1787">
    <property type="taxonomic scope" value="Eukaryota"/>
</dbReference>
<dbReference type="GeneTree" id="ENSGT00940000154778"/>
<dbReference type="HOGENOM" id="CLU_000218_2_0_1"/>
<dbReference type="InParanoid" id="P50851"/>
<dbReference type="OrthoDB" id="26681at2759"/>
<dbReference type="PAN-GO" id="P50851">
    <property type="GO annotations" value="4 GO annotations based on evolutionary models"/>
</dbReference>
<dbReference type="PhylomeDB" id="P50851"/>
<dbReference type="TreeFam" id="TF313490"/>
<dbReference type="PathwayCommons" id="P50851"/>
<dbReference type="SignaLink" id="P50851"/>
<dbReference type="SIGNOR" id="P50851"/>
<dbReference type="BioGRID-ORCS" id="987">
    <property type="hits" value="14 hits in 1154 CRISPR screens"/>
</dbReference>
<dbReference type="ChiTaRS" id="LRBA">
    <property type="organism name" value="human"/>
</dbReference>
<dbReference type="EvolutionaryTrace" id="P50851"/>
<dbReference type="GeneWiki" id="LRBA"/>
<dbReference type="GenomeRNAi" id="987"/>
<dbReference type="Pharos" id="P50851">
    <property type="development level" value="Tbio"/>
</dbReference>
<dbReference type="PRO" id="PR:P50851"/>
<dbReference type="Proteomes" id="UP000005640">
    <property type="component" value="Chromosome 4"/>
</dbReference>
<dbReference type="RNAct" id="P50851">
    <property type="molecule type" value="protein"/>
</dbReference>
<dbReference type="Bgee" id="ENSG00000198589">
    <property type="expression patterns" value="Expressed in upper leg skin and 190 other cell types or tissues"/>
</dbReference>
<dbReference type="ExpressionAtlas" id="P50851">
    <property type="expression patterns" value="baseline and differential"/>
</dbReference>
<dbReference type="GO" id="GO:0005829">
    <property type="term" value="C:cytosol"/>
    <property type="evidence" value="ECO:0000314"/>
    <property type="project" value="HPA"/>
</dbReference>
<dbReference type="GO" id="GO:0005789">
    <property type="term" value="C:endoplasmic reticulum membrane"/>
    <property type="evidence" value="ECO:0007669"/>
    <property type="project" value="UniProtKB-SubCell"/>
</dbReference>
<dbReference type="GO" id="GO:0005794">
    <property type="term" value="C:Golgi apparatus"/>
    <property type="evidence" value="ECO:0000314"/>
    <property type="project" value="HPA"/>
</dbReference>
<dbReference type="GO" id="GO:0005765">
    <property type="term" value="C:lysosomal membrane"/>
    <property type="evidence" value="ECO:0007669"/>
    <property type="project" value="UniProtKB-SubCell"/>
</dbReference>
<dbReference type="GO" id="GO:0016020">
    <property type="term" value="C:membrane"/>
    <property type="evidence" value="ECO:0007005"/>
    <property type="project" value="UniProtKB"/>
</dbReference>
<dbReference type="GO" id="GO:0005886">
    <property type="term" value="C:plasma membrane"/>
    <property type="evidence" value="ECO:0007669"/>
    <property type="project" value="UniProtKB-SubCell"/>
</dbReference>
<dbReference type="GO" id="GO:0019901">
    <property type="term" value="F:protein kinase binding"/>
    <property type="evidence" value="ECO:0000318"/>
    <property type="project" value="GO_Central"/>
</dbReference>
<dbReference type="GO" id="GO:0000423">
    <property type="term" value="P:mitophagy"/>
    <property type="evidence" value="ECO:0000315"/>
    <property type="project" value="UniProtKB"/>
</dbReference>
<dbReference type="GO" id="GO:0008104">
    <property type="term" value="P:protein localization"/>
    <property type="evidence" value="ECO:0000318"/>
    <property type="project" value="GO_Central"/>
</dbReference>
<dbReference type="GO" id="GO:0034497">
    <property type="term" value="P:protein localization to phagophore assembly site"/>
    <property type="evidence" value="ECO:0000315"/>
    <property type="project" value="UniProtKB"/>
</dbReference>
<dbReference type="CDD" id="cd06071">
    <property type="entry name" value="Beach"/>
    <property type="match status" value="1"/>
</dbReference>
<dbReference type="CDD" id="cd01201">
    <property type="entry name" value="PH_BEACH"/>
    <property type="match status" value="1"/>
</dbReference>
<dbReference type="FunFam" id="2.130.10.10:FF:000886">
    <property type="entry name" value="lipopolysaccharide-responsive and beige-like anchor protein isoform X1"/>
    <property type="match status" value="1"/>
</dbReference>
<dbReference type="FunFam" id="1.25.10.10:FF:000168">
    <property type="entry name" value="LPS responsive beige-like anchor protein"/>
    <property type="match status" value="1"/>
</dbReference>
<dbReference type="FunFam" id="1.10.1540.10:FF:000001">
    <property type="entry name" value="neurobeachin isoform X1"/>
    <property type="match status" value="1"/>
</dbReference>
<dbReference type="FunFam" id="2.30.29.30:FF:000059">
    <property type="entry name" value="neurobeachin isoform X1"/>
    <property type="match status" value="1"/>
</dbReference>
<dbReference type="FunFam" id="2.60.120.200:FF:000010">
    <property type="entry name" value="neurobeachin isoform X2"/>
    <property type="match status" value="1"/>
</dbReference>
<dbReference type="Gene3D" id="2.60.120.200">
    <property type="match status" value="1"/>
</dbReference>
<dbReference type="Gene3D" id="1.10.1540.10">
    <property type="entry name" value="BEACH domain"/>
    <property type="match status" value="1"/>
</dbReference>
<dbReference type="Gene3D" id="1.25.10.10">
    <property type="entry name" value="Leucine-rich Repeat Variant"/>
    <property type="match status" value="1"/>
</dbReference>
<dbReference type="Gene3D" id="2.30.29.30">
    <property type="entry name" value="Pleckstrin-homology domain (PH domain)/Phosphotyrosine-binding domain (PTB)"/>
    <property type="match status" value="1"/>
</dbReference>
<dbReference type="Gene3D" id="2.130.10.10">
    <property type="entry name" value="YVTN repeat-like/Quinoprotein amine dehydrogenase"/>
    <property type="match status" value="2"/>
</dbReference>
<dbReference type="InterPro" id="IPR011989">
    <property type="entry name" value="ARM-like"/>
</dbReference>
<dbReference type="InterPro" id="IPR016024">
    <property type="entry name" value="ARM-type_fold"/>
</dbReference>
<dbReference type="InterPro" id="IPR000409">
    <property type="entry name" value="BEACH_dom"/>
</dbReference>
<dbReference type="InterPro" id="IPR036372">
    <property type="entry name" value="BEACH_dom_sf"/>
</dbReference>
<dbReference type="InterPro" id="IPR050865">
    <property type="entry name" value="BEACH_Domain"/>
</dbReference>
<dbReference type="InterPro" id="IPR013320">
    <property type="entry name" value="ConA-like_dom_sf"/>
</dbReference>
<dbReference type="InterPro" id="IPR046851">
    <property type="entry name" value="NBCH_WD40"/>
</dbReference>
<dbReference type="InterPro" id="IPR010508">
    <property type="entry name" value="NBEA-like_DUF1088"/>
</dbReference>
<dbReference type="InterPro" id="IPR031570">
    <property type="entry name" value="NBEA/BDCP_DUF4704"/>
</dbReference>
<dbReference type="InterPro" id="IPR046852">
    <property type="entry name" value="Neurobeachin_a-sol"/>
</dbReference>
<dbReference type="InterPro" id="IPR023362">
    <property type="entry name" value="PH-BEACH_dom"/>
</dbReference>
<dbReference type="InterPro" id="IPR011993">
    <property type="entry name" value="PH-like_dom_sf"/>
</dbReference>
<dbReference type="InterPro" id="IPR015943">
    <property type="entry name" value="WD40/YVTN_repeat-like_dom_sf"/>
</dbReference>
<dbReference type="InterPro" id="IPR036322">
    <property type="entry name" value="WD40_repeat_dom_sf"/>
</dbReference>
<dbReference type="InterPro" id="IPR001680">
    <property type="entry name" value="WD40_rpt"/>
</dbReference>
<dbReference type="PANTHER" id="PTHR13743">
    <property type="entry name" value="BEIGE/BEACH-RELATED"/>
    <property type="match status" value="1"/>
</dbReference>
<dbReference type="PANTHER" id="PTHR13743:SF64">
    <property type="entry name" value="LIPOPOLYSACCHARIDE-RESPONSIVE AND BEIGE-LIKE ANCHOR PROTEIN"/>
    <property type="match status" value="1"/>
</dbReference>
<dbReference type="Pfam" id="PF02138">
    <property type="entry name" value="Beach"/>
    <property type="match status" value="1"/>
</dbReference>
<dbReference type="Pfam" id="PF06469">
    <property type="entry name" value="DUF1088"/>
    <property type="match status" value="1"/>
</dbReference>
<dbReference type="Pfam" id="PF15787">
    <property type="entry name" value="DUF4704"/>
    <property type="match status" value="1"/>
</dbReference>
<dbReference type="Pfam" id="PF13385">
    <property type="entry name" value="Laminin_G_3"/>
    <property type="match status" value="1"/>
</dbReference>
<dbReference type="Pfam" id="PF20426">
    <property type="entry name" value="NBCH_WD40"/>
    <property type="match status" value="1"/>
</dbReference>
<dbReference type="Pfam" id="PF20425">
    <property type="entry name" value="Neurobeachin"/>
    <property type="match status" value="1"/>
</dbReference>
<dbReference type="Pfam" id="PF14844">
    <property type="entry name" value="PH_BEACH"/>
    <property type="match status" value="1"/>
</dbReference>
<dbReference type="SMART" id="SM01026">
    <property type="entry name" value="Beach"/>
    <property type="match status" value="1"/>
</dbReference>
<dbReference type="SMART" id="SM00320">
    <property type="entry name" value="WD40"/>
    <property type="match status" value="5"/>
</dbReference>
<dbReference type="SUPFAM" id="SSF48371">
    <property type="entry name" value="ARM repeat"/>
    <property type="match status" value="1"/>
</dbReference>
<dbReference type="SUPFAM" id="SSF81837">
    <property type="entry name" value="BEACH domain"/>
    <property type="match status" value="1"/>
</dbReference>
<dbReference type="SUPFAM" id="SSF49899">
    <property type="entry name" value="Concanavalin A-like lectins/glucanases"/>
    <property type="match status" value="1"/>
</dbReference>
<dbReference type="SUPFAM" id="SSF50729">
    <property type="entry name" value="PH domain-like"/>
    <property type="match status" value="1"/>
</dbReference>
<dbReference type="SUPFAM" id="SSF50978">
    <property type="entry name" value="WD40 repeat-like"/>
    <property type="match status" value="1"/>
</dbReference>
<dbReference type="PROSITE" id="PS50197">
    <property type="entry name" value="BEACH"/>
    <property type="match status" value="1"/>
</dbReference>
<dbReference type="PROSITE" id="PS51783">
    <property type="entry name" value="PH_BEACH"/>
    <property type="match status" value="1"/>
</dbReference>
<sequence length="2863" mass="319108">MASEDNRVPSPPPTGDDGGGGGREETPTEGGALSLKPGLPIRGIRMKFAVLTGLVEVGEVSNRDIVETVFNLLVGGQFDLEMNFIIQEGESINCMVDLLEKCDITCQAEVWSMFTAILKKSIRNLQVCTEVGLVEKVLGKIEKVDNMIADLLVDMLGVLASYNLTVRELKLFFSKLQGDKGRWPPHAGKLLSVLKHMPQKYGPDAFFNFPGKSAAAIALPPIAKWPYQNGFTFHTWLRMDPVNNINVDKDKPYLYCFRTSKGLGYSAHFVGGCLIVTSIKSKGKGFQHCVKFDFKPQKWYMVTIVHIYNRWKNSELRCYVNGELASYGEITWFVNTSDTFDKCFLGSSETADANRVFCGQMTAVYLFSEALNAAQIFAIYQLGLGYKGTFKFKAESDLFLAEHHKLLLYDGKLSSAIAFTYNPRATDAQLCLESSPKDNPSIFVHSPHALMLQDVKAVLTHSIQSAMHSIGGVQVLFPLFAQLDYRQYLSDEIDLTICSTLLAFIMELLKNSIAMQEQMLACKGFLVIGYSLEKSSKSHVSRAVLELCLAFSKYLSNLQNGMPLLKQLCDHVLLNPAIWIHTPAKVQLMLYTYLSTEFIGTVNIYNTIRRVGTVLLIMHTLKYYYWAVNPQDRSGITPKGLDGPRPNQKEMLSLRAFLLMFIKQLVMKDSGVKEDELQAILNYLLTMHEDDNLMDVLQLLVALMSEHPNSMIPAFDQRNGLRVIYKLLASKSEGIRVQALKAMGYFLKHLAPKRKAEVMLGHGLFSLLAERLMLQTNLITMTTYNVLFEILIEQIGTQVIHKQHPDPDSSVKIQNPQILKVIATLLRNSPQCPESMEVRRAFLSDMIKLFNNSRENRRSLLQCSVWQEWMLSLCYFNPKNSDEQKITEMVYAIFRILLYHAVKYEWGGWRVWVDTLSITHSKVTFEIHKENLANIFREQQGKVDEEIGLCSSTSVQAASGIRRDINVSVGSQQPDTKDSPVCPHFTTNGNENSSIEKTSSLESASNIELQTTNTSYEEMKAEQENQELPDEGTLEETLTNETRNADDLEVSSDIIEAVAISSNSFITTGKDSMTVSEVTASISSPSEEDASEMPEFLDKSIVEEEEDDDYVELKVEGSPTEEANLPTELQDNSLSPAASEAGEKLDMFGNDDKLIFQEGKPVTEKQTDTETQDSKDSGIQTMTASGSSAMSPETTVSQIAVESDLGQMLEEGKKATNLTRETKLINDCHGSVSEASSEQKIAKLDVSNVATDTERLELKASPNVEAPQPHRHVLEISRQHEQPGQGIAPDAVNGQRRDSRSTVFRIPEFNWSQMHQRLLTDLLFSIETDIQMWRSHSTKTVMDFVNSSDNVIFVHNTIHLISQVMDNMVMACGGILPLLSAATSATHELENIEPTQGLSIEASVTFLQRLISLVDVLIFASSLGFTEIEAEKSMSSGGILRQCLRLVCAVAVRNCLECQQHSQLKTRGDKALKPMHSLIPLGKSAAKSPVDIVTGGISPVRDLDRLLQDMDINRLRAVVFRDIEDSKQAQFLALAVVYFISVLMVSKYRDILEPQNERHSQSCTETGSENENVSLSEITPAAFSTLTTASVEESESTSSARRRDSGIGEETATGLGSHVEVTPHTAPPGVSAGPDAISEVLSTLSLEVNKSPETKNDRGNDLDTKATPSVSVSKNVNVKDILRSLVNIPADGVTVDPALLPPACLGALGDLSVEQPVQFRSFDRSVIVAAKKSAVSPSTFNTSIPTNAVSVVSSVDSAQASDMGGESPGSRSSNAKLPSVPTVDSVSQDPVSNMSITERLEHALEKAAPLLREIFVDFAPFLSRTLLGSHGQELLIEGTSLVCMKSSSSVVELVMLLCSQEWQNSIQKNAGLAFIELVNEGRLLSQTMKDHLVRVANEAEFILSRQRAEDIHRHAEFESLCAQYSADKREDEKMCDHLIRAAKYRDHVTATQLIQKIINILTDKHGAWGNSAVSRPLEFWRLDYWEDDLRRRRRFVRNPLGSTHPEATLKTAVEHVCIFKLRENSKATDEDILAKGKQSIRSQALGNQNSENEILLEGDDDTLSSVDEKDLENLAGPVSLSTPAQLVAPSVVVKGTLSVTSSELYFEVDEEDPNFKKIDPKILAYTEGLHGKWLFTEIRSIFSRRYLLQNTALEIFMANRVAVMFNFPDPATVKKVVNYLPRVGVGTSFGLPQTRRISLASPRQLFKASNMTQRWQHREISNFEYLMFLNTIAGRSYNDLNQYPVFPWVITNYESEELDLTLPTNFRDLSKPIGALNPKRAAFFAERYESWEDDQVPKFHYGTHYSTASFVLAWLLRIEPFTTYFLNLQGGKFDHADRTFSSISRAWRNSQRDTSDIKELIPEFYYLPEMFVNFNNYNLGVMDDGTVVSDVELPPWAKTSEEFVHINRLALESEFVSCQLHQWIDLIFGYKQQGPEAVRALNVFYYLTYEGAVNLNSITDPVLREAVEAQIRSFGQTPSQLLIEPHPPRGSAMQVSPLMFTDKAQQDVIMVLKFPSNSPVTHVAANTQPGLATPAVITVTANRLFAVNKWHNLPAHQGAVQDQPYQLPVEIDPLIASNTGMHRRQITDLLDQSIQVHSQCFVITSDNRYILVCGFWDKSFRVYSTDTGRLIQVVFGHWDVVTCLARSESYIGGNCYILSGSRDATLLLWYWNGKCSGIGDNPGSETAAPRAILTGHDYEVTCAAVCAELGLVLSGSQEGPCLIHSMNGDLLRTLEGPENCLKPKLIQASREGHCVIFYENGLFCTFSVNGKLQATMETDDNIRAIQLSRDGQYLLTGGDRGVVVVRQVSDLKQLFAYPGCDAGIRAMALSYDQRCIISGMASGSIVLFYNDFNRWHHEYQTRY</sequence>
<accession>P50851</accession>
<accession>Q4W5J4</accession>
<accession>Q4W5L6</accession>
<accession>Q8NFQ0</accession>
<accession>Q9H2U3</accession>
<accession>Q9H2U4</accession>
<gene>
    <name evidence="14 17" type="primary">LRBA</name>
    <name evidence="13" type="synonym">BGL</name>
    <name evidence="13" type="synonym">CDC4L</name>
    <name evidence="11" type="synonym">LBA</name>
</gene>
<protein>
    <recommendedName>
        <fullName>Lipopolysaccharide-responsive and beige-like anchor protein</fullName>
    </recommendedName>
    <alternativeName>
        <fullName evidence="11">Beige-like protein</fullName>
    </alternativeName>
    <alternativeName>
        <fullName evidence="13">CDC4-like protein</fullName>
    </alternativeName>
</protein>
<proteinExistence type="evidence at protein level"/>
<reference key="1">
    <citation type="journal article" date="2001" name="J. Immunol.">
        <title>Identification of a novel lipopolysaccharide-inducible gene with key features of both A kinase anchor proteins and chs1/beige proteins.</title>
        <authorList>
            <person name="Wang J.-W."/>
            <person name="Howson J."/>
            <person name="Haller E."/>
            <person name="Kerr W.G."/>
        </authorList>
    </citation>
    <scope>NUCLEOTIDE SEQUENCE [MRNA] (ISOFORM 1)</scope>
</reference>
<reference key="2">
    <citation type="journal article" date="2002" name="Genomics">
        <title>BCL8 is a novel, evolutionarily conserved human gene family encoding proteins with presumptive protein kinase A anchoring function.</title>
        <authorList>
            <person name="Dyomin V.G."/>
            <person name="Chaganti S.R."/>
            <person name="Dyomina K."/>
            <person name="Palanisamy N."/>
            <person name="Murty V.V.V.S."/>
            <person name="Dalla-Favera R."/>
            <person name="Chaganti R.S.K."/>
        </authorList>
    </citation>
    <scope>NUCLEOTIDE SEQUENCE [MRNA] (ISOFORM 2)</scope>
    <scope>TISSUE SPECIFICITY</scope>
    <scope>VARIANT GLY-1090</scope>
</reference>
<reference key="3">
    <citation type="journal article" date="2005" name="Nature">
        <title>Generation and annotation of the DNA sequences of human chromosomes 2 and 4.</title>
        <authorList>
            <person name="Hillier L.W."/>
            <person name="Graves T.A."/>
            <person name="Fulton R.S."/>
            <person name="Fulton L.A."/>
            <person name="Pepin K.H."/>
            <person name="Minx P."/>
            <person name="Wagner-McPherson C."/>
            <person name="Layman D."/>
            <person name="Wylie K."/>
            <person name="Sekhon M."/>
            <person name="Becker M.C."/>
            <person name="Fewell G.A."/>
            <person name="Delehaunty K.D."/>
            <person name="Miner T.L."/>
            <person name="Nash W.E."/>
            <person name="Kremitzki C."/>
            <person name="Oddy L."/>
            <person name="Du H."/>
            <person name="Sun H."/>
            <person name="Bradshaw-Cordum H."/>
            <person name="Ali J."/>
            <person name="Carter J."/>
            <person name="Cordes M."/>
            <person name="Harris A."/>
            <person name="Isak A."/>
            <person name="van Brunt A."/>
            <person name="Nguyen C."/>
            <person name="Du F."/>
            <person name="Courtney L."/>
            <person name="Kalicki J."/>
            <person name="Ozersky P."/>
            <person name="Abbott S."/>
            <person name="Armstrong J."/>
            <person name="Belter E.A."/>
            <person name="Caruso L."/>
            <person name="Cedroni M."/>
            <person name="Cotton M."/>
            <person name="Davidson T."/>
            <person name="Desai A."/>
            <person name="Elliott G."/>
            <person name="Erb T."/>
            <person name="Fronick C."/>
            <person name="Gaige T."/>
            <person name="Haakenson W."/>
            <person name="Haglund K."/>
            <person name="Holmes A."/>
            <person name="Harkins R."/>
            <person name="Kim K."/>
            <person name="Kruchowski S.S."/>
            <person name="Strong C.M."/>
            <person name="Grewal N."/>
            <person name="Goyea E."/>
            <person name="Hou S."/>
            <person name="Levy A."/>
            <person name="Martinka S."/>
            <person name="Mead K."/>
            <person name="McLellan M.D."/>
            <person name="Meyer R."/>
            <person name="Randall-Maher J."/>
            <person name="Tomlinson C."/>
            <person name="Dauphin-Kohlberg S."/>
            <person name="Kozlowicz-Reilly A."/>
            <person name="Shah N."/>
            <person name="Swearengen-Shahid S."/>
            <person name="Snider J."/>
            <person name="Strong J.T."/>
            <person name="Thompson J."/>
            <person name="Yoakum M."/>
            <person name="Leonard S."/>
            <person name="Pearman C."/>
            <person name="Trani L."/>
            <person name="Radionenko M."/>
            <person name="Waligorski J.E."/>
            <person name="Wang C."/>
            <person name="Rock S.M."/>
            <person name="Tin-Wollam A.-M."/>
            <person name="Maupin R."/>
            <person name="Latreille P."/>
            <person name="Wendl M.C."/>
            <person name="Yang S.-P."/>
            <person name="Pohl C."/>
            <person name="Wallis J.W."/>
            <person name="Spieth J."/>
            <person name="Bieri T.A."/>
            <person name="Berkowicz N."/>
            <person name="Nelson J.O."/>
            <person name="Osborne J."/>
            <person name="Ding L."/>
            <person name="Meyer R."/>
            <person name="Sabo A."/>
            <person name="Shotland Y."/>
            <person name="Sinha P."/>
            <person name="Wohldmann P.E."/>
            <person name="Cook L.L."/>
            <person name="Hickenbotham M.T."/>
            <person name="Eldred J."/>
            <person name="Williams D."/>
            <person name="Jones T.A."/>
            <person name="She X."/>
            <person name="Ciccarelli F.D."/>
            <person name="Izaurralde E."/>
            <person name="Taylor J."/>
            <person name="Schmutz J."/>
            <person name="Myers R.M."/>
            <person name="Cox D.R."/>
            <person name="Huang X."/>
            <person name="McPherson J.D."/>
            <person name="Mardis E.R."/>
            <person name="Clifton S.W."/>
            <person name="Warren W.C."/>
            <person name="Chinwalla A.T."/>
            <person name="Eddy S.R."/>
            <person name="Marra M.A."/>
            <person name="Ovcharenko I."/>
            <person name="Furey T.S."/>
            <person name="Miller W."/>
            <person name="Eichler E.E."/>
            <person name="Bork P."/>
            <person name="Suyama M."/>
            <person name="Torrents D."/>
            <person name="Waterston R.H."/>
            <person name="Wilson R.K."/>
        </authorList>
    </citation>
    <scope>NUCLEOTIDE SEQUENCE [LARGE SCALE GENOMIC DNA]</scope>
</reference>
<reference key="4">
    <citation type="submission" date="1994-12" db="EMBL/GenBank/DDBJ databases">
        <authorList>
            <person name="Mager D.L."/>
        </authorList>
    </citation>
    <scope>NUCLEOTIDE SEQUENCE [MRNA] OF 775-2863 (ISOFORM 1)</scope>
</reference>
<reference key="5">
    <citation type="journal article" date="1992" name="Genomics">
        <title>Strategy for detecting cellular transcripts promoted by human endogenous long terminal repeats: identification of a novel gene (CDC4L) with homology to yeast CDC4.</title>
        <authorList>
            <person name="Feuchter A.E."/>
            <person name="Freeman J.D."/>
            <person name="Mager D.L."/>
        </authorList>
    </citation>
    <scope>NUCLEOTIDE SEQUENCE [MRNA] OF 2179-2863 (ISOFORM 1)</scope>
</reference>
<reference key="6">
    <citation type="journal article" date="2006" name="Cell">
        <title>Global, in vivo, and site-specific phosphorylation dynamics in signaling networks.</title>
        <authorList>
            <person name="Olsen J.V."/>
            <person name="Blagoev B."/>
            <person name="Gnad F."/>
            <person name="Macek B."/>
            <person name="Kumar C."/>
            <person name="Mortensen P."/>
            <person name="Mann M."/>
        </authorList>
    </citation>
    <scope>IDENTIFICATION BY MASS SPECTROMETRY [LARGE SCALE ANALYSIS]</scope>
    <source>
        <tissue>Cervix carcinoma</tissue>
    </source>
</reference>
<reference key="7">
    <citation type="journal article" date="2007" name="Science">
        <title>ATM and ATR substrate analysis reveals extensive protein networks responsive to DNA damage.</title>
        <authorList>
            <person name="Matsuoka S."/>
            <person name="Ballif B.A."/>
            <person name="Smogorzewska A."/>
            <person name="McDonald E.R. III"/>
            <person name="Hurov K.E."/>
            <person name="Luo J."/>
            <person name="Bakalarski C.E."/>
            <person name="Zhao Z."/>
            <person name="Solimini N."/>
            <person name="Lerenthal Y."/>
            <person name="Shiloh Y."/>
            <person name="Gygi S.P."/>
            <person name="Elledge S.J."/>
        </authorList>
    </citation>
    <scope>IDENTIFICATION BY MASS SPECTROMETRY [LARGE SCALE ANALYSIS]</scope>
    <source>
        <tissue>Embryonic kidney</tissue>
    </source>
</reference>
<reference key="8">
    <citation type="journal article" date="2008" name="Proc. Natl. Acad. Sci. U.S.A.">
        <title>A quantitative atlas of mitotic phosphorylation.</title>
        <authorList>
            <person name="Dephoure N."/>
            <person name="Zhou C."/>
            <person name="Villen J."/>
            <person name="Beausoleil S.A."/>
            <person name="Bakalarski C.E."/>
            <person name="Elledge S.J."/>
            <person name="Gygi S.P."/>
        </authorList>
    </citation>
    <scope>PHOSPHORYLATION [LARGE SCALE ANALYSIS] AT SER-979</scope>
    <scope>IDENTIFICATION BY MASS SPECTROMETRY [LARGE SCALE ANALYSIS]</scope>
    <source>
        <tissue>Cervix carcinoma</tissue>
    </source>
</reference>
<reference key="9">
    <citation type="journal article" date="2009" name="Anal. Chem.">
        <title>Lys-N and trypsin cover complementary parts of the phosphoproteome in a refined SCX-based approach.</title>
        <authorList>
            <person name="Gauci S."/>
            <person name="Helbig A.O."/>
            <person name="Slijper M."/>
            <person name="Krijgsveld J."/>
            <person name="Heck A.J."/>
            <person name="Mohammed S."/>
        </authorList>
    </citation>
    <scope>ACETYLATION [LARGE SCALE ANALYSIS] AT ALA-2</scope>
    <scope>CLEAVAGE OF INITIATOR METHIONINE [LARGE SCALE ANALYSIS]</scope>
    <scope>IDENTIFICATION BY MASS SPECTROMETRY [LARGE SCALE ANALYSIS]</scope>
</reference>
<reference key="10">
    <citation type="journal article" date="2009" name="Sci. Signal.">
        <title>Quantitative phosphoproteomic analysis of T cell receptor signaling reveals system-wide modulation of protein-protein interactions.</title>
        <authorList>
            <person name="Mayya V."/>
            <person name="Lundgren D.H."/>
            <person name="Hwang S.-I."/>
            <person name="Rezaul K."/>
            <person name="Wu L."/>
            <person name="Eng J.K."/>
            <person name="Rodionov V."/>
            <person name="Han D.K."/>
        </authorList>
    </citation>
    <scope>IDENTIFICATION BY MASS SPECTROMETRY [LARGE SCALE ANALYSIS]</scope>
    <source>
        <tissue>Leukemic T-cell</tissue>
    </source>
</reference>
<reference key="11">
    <citation type="journal article" date="2010" name="Sci. Signal.">
        <title>Quantitative phosphoproteomics reveals widespread full phosphorylation site occupancy during mitosis.</title>
        <authorList>
            <person name="Olsen J.V."/>
            <person name="Vermeulen M."/>
            <person name="Santamaria A."/>
            <person name="Kumar C."/>
            <person name="Miller M.L."/>
            <person name="Jensen L.J."/>
            <person name="Gnad F."/>
            <person name="Cox J."/>
            <person name="Jensen T.S."/>
            <person name="Nigg E.A."/>
            <person name="Brunak S."/>
            <person name="Mann M."/>
        </authorList>
    </citation>
    <scope>PHOSPHORYLATION [LARGE SCALE ANALYSIS] AT SER-1488</scope>
    <scope>IDENTIFICATION BY MASS SPECTROMETRY [LARGE SCALE ANALYSIS]</scope>
    <source>
        <tissue>Cervix carcinoma</tissue>
    </source>
</reference>
<reference key="12">
    <citation type="journal article" date="2011" name="BMC Syst. Biol.">
        <title>Initial characterization of the human central proteome.</title>
        <authorList>
            <person name="Burkard T.R."/>
            <person name="Planyavsky M."/>
            <person name="Kaupe I."/>
            <person name="Breitwieser F.P."/>
            <person name="Buerckstuemmer T."/>
            <person name="Bennett K.L."/>
            <person name="Superti-Furga G."/>
            <person name="Colinge J."/>
        </authorList>
    </citation>
    <scope>IDENTIFICATION BY MASS SPECTROMETRY [LARGE SCALE ANALYSIS]</scope>
</reference>
<reference key="13">
    <citation type="journal article" date="2011" name="Sci. Signal.">
        <title>System-wide temporal characterization of the proteome and phosphoproteome of human embryonic stem cell differentiation.</title>
        <authorList>
            <person name="Rigbolt K.T."/>
            <person name="Prokhorova T.A."/>
            <person name="Akimov V."/>
            <person name="Henningsen J."/>
            <person name="Johansen P.T."/>
            <person name="Kratchmarova I."/>
            <person name="Kassem M."/>
            <person name="Mann M."/>
            <person name="Olsen J.V."/>
            <person name="Blagoev B."/>
        </authorList>
    </citation>
    <scope>ACETYLATION [LARGE SCALE ANALYSIS] AT ALA-2</scope>
    <scope>PHOSPHORYLATION [LARGE SCALE ANALYSIS] AT SER-10; SER-1100 AND SER-1139</scope>
    <scope>CLEAVAGE OF INITIATOR METHIONINE [LARGE SCALE ANALYSIS]</scope>
    <scope>IDENTIFICATION BY MASS SPECTROMETRY [LARGE SCALE ANALYSIS]</scope>
</reference>
<reference key="14">
    <citation type="journal article" date="2012" name="Proc. Natl. Acad. Sci. U.S.A.">
        <title>N-terminal acetylome analyses and functional insights of the N-terminal acetyltransferase NatB.</title>
        <authorList>
            <person name="Van Damme P."/>
            <person name="Lasa M."/>
            <person name="Polevoda B."/>
            <person name="Gazquez C."/>
            <person name="Elosegui-Artola A."/>
            <person name="Kim D.S."/>
            <person name="De Juan-Pardo E."/>
            <person name="Demeyer K."/>
            <person name="Hole K."/>
            <person name="Larrea E."/>
            <person name="Timmerman E."/>
            <person name="Prieto J."/>
            <person name="Arnesen T."/>
            <person name="Sherman F."/>
            <person name="Gevaert K."/>
            <person name="Aldabe R."/>
        </authorList>
    </citation>
    <scope>IDENTIFICATION BY MASS SPECTROMETRY [LARGE SCALE ANALYSIS]</scope>
</reference>
<reference key="15">
    <citation type="journal article" date="2013" name="J. Proteome Res.">
        <title>Toward a comprehensive characterization of a human cancer cell phosphoproteome.</title>
        <authorList>
            <person name="Zhou H."/>
            <person name="Di Palma S."/>
            <person name="Preisinger C."/>
            <person name="Peng M."/>
            <person name="Polat A.N."/>
            <person name="Heck A.J."/>
            <person name="Mohammed S."/>
        </authorList>
    </citation>
    <scope>PHOSPHORYLATION [LARGE SCALE ANALYSIS] AT SER-10; SER-1135; SER-1247; SER-1261; SER-1488; SER-1498; SER-2064 AND SER-2496</scope>
    <scope>IDENTIFICATION BY MASS SPECTROMETRY [LARGE SCALE ANALYSIS]</scope>
    <source>
        <tissue>Cervix carcinoma</tissue>
        <tissue>Erythroleukemia</tissue>
    </source>
</reference>
<reference key="16">
    <citation type="journal article" date="2014" name="J. Proteomics">
        <title>An enzyme assisted RP-RPLC approach for in-depth analysis of human liver phosphoproteome.</title>
        <authorList>
            <person name="Bian Y."/>
            <person name="Song C."/>
            <person name="Cheng K."/>
            <person name="Dong M."/>
            <person name="Wang F."/>
            <person name="Huang J."/>
            <person name="Sun D."/>
            <person name="Wang L."/>
            <person name="Ye M."/>
            <person name="Zou H."/>
        </authorList>
    </citation>
    <scope>PHOSPHORYLATION [LARGE SCALE ANALYSIS] AT SER-1261 AND SER-1605</scope>
    <scope>IDENTIFICATION BY MASS SPECTROMETRY [LARGE SCALE ANALYSIS]</scope>
    <source>
        <tissue>Liver</tissue>
    </source>
</reference>
<reference key="17">
    <citation type="journal article" date="2019" name="NPJ Genom. Med.">
        <title>Dominant TOM1 mutation associated with combined immunodeficiency and autoimmune disease.</title>
        <authorList>
            <person name="Keskitalo S."/>
            <person name="Haapaniemi E.M."/>
            <person name="Glumoff V."/>
            <person name="Liu X."/>
            <person name="Lehtinen V."/>
            <person name="Fogarty C."/>
            <person name="Rajala H."/>
            <person name="Chiang S.C."/>
            <person name="Mustjoki S."/>
            <person name="Kovanen P."/>
            <person name="Lohi J."/>
            <person name="Bryceson Y.T."/>
            <person name="Seppaenen M."/>
            <person name="Kere J."/>
            <person name="Heiskanen K."/>
            <person name="Varjosalo M."/>
        </authorList>
    </citation>
    <scope>INTERACTION WITH TOM1 AND TOLLIP</scope>
    <scope>SUBCELLULAR LOCATION</scope>
</reference>
<reference key="18">
    <citation type="journal article" date="2021" name="Mol. Cell">
        <title>ATG4 family proteins drive phagophore growth independently of the LC3/GABARAP lipidation system.</title>
        <authorList>
            <person name="Nguyen T.N."/>
            <person name="Padman B.S."/>
            <person name="Zellner S."/>
            <person name="Khuu G."/>
            <person name="Uoselis L."/>
            <person name="Lam W.K."/>
            <person name="Skulsuppaisarn M."/>
            <person name="Lindblom R.S.J."/>
            <person name="Watts E.M."/>
            <person name="Behrends C."/>
            <person name="Lazarou M."/>
        </authorList>
    </citation>
    <scope>FUNCTION</scope>
</reference>
<reference key="19">
    <citation type="journal article" date="2004" name="Biochemistry">
        <title>Crystal structure of the PH-BEACH domains of human LRBA/BGL.</title>
        <authorList>
            <person name="Gebauer D."/>
            <person name="Li J."/>
            <person name="Jogl G."/>
            <person name="Shen Y."/>
            <person name="Myszka D.G."/>
            <person name="Tong L."/>
        </authorList>
    </citation>
    <scope>X-RAY CRYSTALLOGRAPHY (2.4 ANGSTROMS) OF 2076-2489</scope>
</reference>
<reference key="20">
    <citation type="journal article" date="2006" name="Science">
        <title>The consensus coding sequences of human breast and colorectal cancers.</title>
        <authorList>
            <person name="Sjoeblom T."/>
            <person name="Jones S."/>
            <person name="Wood L.D."/>
            <person name="Parsons D.W."/>
            <person name="Lin J."/>
            <person name="Barber T.D."/>
            <person name="Mandelker D."/>
            <person name="Leary R.J."/>
            <person name="Ptak J."/>
            <person name="Silliman N."/>
            <person name="Szabo S."/>
            <person name="Buckhaults P."/>
            <person name="Farrell C."/>
            <person name="Meeh P."/>
            <person name="Markowitz S.D."/>
            <person name="Willis J."/>
            <person name="Dawson D."/>
            <person name="Willson J.K.V."/>
            <person name="Gazdar A.F."/>
            <person name="Hartigan J."/>
            <person name="Wu L."/>
            <person name="Liu C."/>
            <person name="Parmigiani G."/>
            <person name="Park B.H."/>
            <person name="Bachman K.E."/>
            <person name="Papadopoulos N."/>
            <person name="Vogelstein B."/>
            <person name="Kinzler K.W."/>
            <person name="Velculescu V.E."/>
        </authorList>
    </citation>
    <scope>VARIANTS [LARGE SCALE ANALYSIS] HIS-2038; ARG-2274 AND LYS-2701</scope>
</reference>
<reference key="21">
    <citation type="journal article" date="2012" name="Am. J. Hum. Genet.">
        <title>Deleterious mutations in LRBA are associated with a syndrome of immune deficiency and autoimmunity.</title>
        <authorList>
            <person name="Lopez-Herrera G."/>
            <person name="Tampella G."/>
            <person name="Pan-Hammarstrom Q."/>
            <person name="Herholz P."/>
            <person name="Trujillo-Vargas C.M."/>
            <person name="Phadwal K."/>
            <person name="Simon A.K."/>
            <person name="Moutschen M."/>
            <person name="Etzioni A."/>
            <person name="Mory A."/>
            <person name="Srugo I."/>
            <person name="Melamed D."/>
            <person name="Hultenby K."/>
            <person name="Liu C."/>
            <person name="Baronio M."/>
            <person name="Vitali M."/>
            <person name="Philippet P."/>
            <person name="Dideberg V."/>
            <person name="Aghamohammadi A."/>
            <person name="Rezaei N."/>
            <person name="Enright V."/>
            <person name="Du L."/>
            <person name="Salzer U."/>
            <person name="Eibel H."/>
            <person name="Pfeifer D."/>
            <person name="Veelken H."/>
            <person name="Stauss H."/>
            <person name="Lougaris V."/>
            <person name="Plebani A."/>
            <person name="Gertz E.M."/>
            <person name="Schaffer A.A."/>
            <person name="Hammarstrom L."/>
            <person name="Grimbacher B."/>
        </authorList>
    </citation>
    <scope>VARIANT CVID8 SER-2657</scope>
</reference>
<comment type="function">
    <text evidence="1 10">Involved in coupling signal transduction and vesicle trafficking to enable polarized secretion and/or membrane deposition of immune effector molecules (By similarity). Involved in phagophore growth during mitophagy by regulating ATG9A trafficking to mitochondria (PubMed:33773106).</text>
</comment>
<comment type="subunit">
    <text evidence="9">Interacts with TOM1 and TOLLIP.</text>
</comment>
<comment type="interaction">
    <interactant intactId="EBI-1052167">
        <id>P50851</id>
    </interactant>
    <interactant intactId="EBI-1030991">
        <id>P16410</id>
        <label>CTLA4</label>
    </interactant>
    <organismsDiffer>false</organismsDiffer>
    <experiments>2</experiments>
</comment>
<comment type="subcellular location">
    <subcellularLocation>
        <location evidence="1">Cell membrane</location>
        <topology evidence="2">Single-pass membrane protein</topology>
    </subcellularLocation>
    <subcellularLocation>
        <location evidence="1">Endoplasmic reticulum membrane</location>
        <topology evidence="2">Single-pass membrane protein</topology>
    </subcellularLocation>
    <subcellularLocation>
        <location evidence="9">Golgi apparatus</location>
        <location evidence="9">trans-Golgi network membrane</location>
        <topology evidence="2">Single-pass membrane protein</topology>
    </subcellularLocation>
    <subcellularLocation>
        <location evidence="1">Lysosome membrane</location>
        <topology evidence="2">Single-pass membrane protein</topology>
    </subcellularLocation>
</comment>
<comment type="alternative products">
    <event type="alternative splicing"/>
    <isoform>
        <id>P50851-1</id>
        <name>1</name>
        <sequence type="displayed"/>
    </isoform>
    <isoform>
        <id>P50851-2</id>
        <name>2</name>
        <sequence type="described" ref="VSP_038225 VSP_038226"/>
    </isoform>
</comment>
<comment type="tissue specificity">
    <text evidence="6">Ubiquitous.</text>
</comment>
<comment type="induction">
    <text>By bacterial lipopolysaccharides (LPS).</text>
</comment>
<comment type="disease" evidence="8">
    <disease id="DI-03490">
        <name>Immunodeficiency, common variable, 8, with autoimmunity</name>
        <acronym>CVID8</acronym>
        <description>An autosomal recessive immunologic disorder associated with defective B-cell differentiation and decreased or absent antibody production. Affected individuals have early-childhood onset of recurrent infections, particularly respiratory infections, and also develop variable autoimmune disorders, including idiopathic thrombocytopenic purpura, autoimmune hemolytic anemia, and inflammatory bowel disease.</description>
        <dbReference type="MIM" id="614700"/>
    </disease>
    <text>The disease is caused by variants affecting the gene represented in this entry.</text>
</comment>
<comment type="caution">
    <text evidence="16">Was originally said to be similar to yeast CDC4, but that similarity is very limited.</text>
</comment>
<comment type="sequence caution" evidence="15">
    <conflict type="frameshift">
        <sequence resource="EMBL-CDS" id="AAB09603"/>
    </conflict>
</comment>
<name>LRBA_HUMAN</name>
<feature type="initiator methionine" description="Removed" evidence="19 21">
    <location>
        <position position="1"/>
    </location>
</feature>
<feature type="chain" id="PRO_0000051068" description="Lipopolysaccharide-responsive and beige-like anchor protein">
    <location>
        <begin position="2"/>
        <end position="2863"/>
    </location>
</feature>
<feature type="transmembrane region" description="Helical" evidence="2">
    <location>
        <begin position="1531"/>
        <end position="1548"/>
    </location>
</feature>
<feature type="repeat" description="WD 1">
    <location>
        <begin position="1301"/>
        <end position="1343"/>
    </location>
</feature>
<feature type="domain" description="BEACH-type PH" evidence="4">
    <location>
        <begin position="2073"/>
        <end position="2181"/>
    </location>
</feature>
<feature type="domain" description="BEACH" evidence="3">
    <location>
        <begin position="2200"/>
        <end position="2489"/>
    </location>
</feature>
<feature type="repeat" description="WD 2">
    <location>
        <begin position="2591"/>
        <end position="2633"/>
    </location>
</feature>
<feature type="repeat" description="WD 3">
    <location>
        <begin position="2636"/>
        <end position="2679"/>
    </location>
</feature>
<feature type="repeat" description="WD 4">
    <location>
        <begin position="2695"/>
        <end position="2735"/>
    </location>
</feature>
<feature type="repeat" description="WD 5">
    <location>
        <begin position="2777"/>
        <end position="2816"/>
    </location>
</feature>
<feature type="repeat" description="WD 6">
    <location>
        <begin position="2819"/>
        <end position="2858"/>
    </location>
</feature>
<feature type="region of interest" description="Disordered" evidence="5">
    <location>
        <begin position="1"/>
        <end position="35"/>
    </location>
</feature>
<feature type="region of interest" description="Disordered" evidence="5">
    <location>
        <begin position="969"/>
        <end position="1005"/>
    </location>
</feature>
<feature type="region of interest" description="Disordered" evidence="5">
    <location>
        <begin position="1018"/>
        <end position="1039"/>
    </location>
</feature>
<feature type="region of interest" description="Disordered" evidence="5">
    <location>
        <begin position="1161"/>
        <end position="1193"/>
    </location>
</feature>
<feature type="region of interest" description="Disordered" evidence="5">
    <location>
        <begin position="1586"/>
        <end position="1668"/>
    </location>
</feature>
<feature type="region of interest" description="Disordered" evidence="5">
    <location>
        <begin position="1759"/>
        <end position="1789"/>
    </location>
</feature>
<feature type="coiled-coil region" evidence="2">
    <location>
        <begin position="1006"/>
        <end position="1053"/>
    </location>
</feature>
<feature type="compositionally biased region" description="Polar residues" evidence="5">
    <location>
        <begin position="985"/>
        <end position="1005"/>
    </location>
</feature>
<feature type="compositionally biased region" description="Acidic residues" evidence="5">
    <location>
        <begin position="1024"/>
        <end position="1034"/>
    </location>
</feature>
<feature type="compositionally biased region" description="Basic and acidic residues" evidence="5">
    <location>
        <begin position="1161"/>
        <end position="1176"/>
    </location>
</feature>
<feature type="compositionally biased region" description="Polar residues" evidence="5">
    <location>
        <begin position="1177"/>
        <end position="1193"/>
    </location>
</feature>
<feature type="compositionally biased region" description="Low complexity" evidence="5">
    <location>
        <begin position="1586"/>
        <end position="1599"/>
    </location>
</feature>
<feature type="compositionally biased region" description="Basic and acidic residues" evidence="5">
    <location>
        <begin position="1650"/>
        <end position="1664"/>
    </location>
</feature>
<feature type="compositionally biased region" description="Polar residues" evidence="5">
    <location>
        <begin position="1769"/>
        <end position="1789"/>
    </location>
</feature>
<feature type="modified residue" description="N-acetylalanine" evidence="19 21">
    <location>
        <position position="2"/>
    </location>
</feature>
<feature type="modified residue" description="Phosphoserine" evidence="21 22">
    <location>
        <position position="10"/>
    </location>
</feature>
<feature type="modified residue" description="Phosphoserine" evidence="18">
    <location>
        <position position="979"/>
    </location>
</feature>
<feature type="modified residue" description="Phosphoserine" evidence="1">
    <location>
        <position position="1003"/>
    </location>
</feature>
<feature type="modified residue" description="Phosphoserine" evidence="21">
    <location>
        <position position="1100"/>
    </location>
</feature>
<feature type="modified residue" description="Phosphoserine" evidence="22">
    <location>
        <position position="1135"/>
    </location>
</feature>
<feature type="modified residue" description="Phosphoserine" evidence="21">
    <location>
        <position position="1139"/>
    </location>
</feature>
<feature type="modified residue" description="Phosphoserine" evidence="1">
    <location>
        <position position="1233"/>
    </location>
</feature>
<feature type="modified residue" description="Phosphoserine" evidence="22">
    <location>
        <position position="1247"/>
    </location>
</feature>
<feature type="modified residue" description="Phosphoserine" evidence="22 23">
    <location>
        <position position="1261"/>
    </location>
</feature>
<feature type="modified residue" description="Phosphoserine" evidence="20 22">
    <location>
        <position position="1488"/>
    </location>
</feature>
<feature type="modified residue" description="Phosphoserine" evidence="22">
    <location>
        <position position="1498"/>
    </location>
</feature>
<feature type="modified residue" description="Phosphoserine" evidence="23">
    <location>
        <position position="1605"/>
    </location>
</feature>
<feature type="modified residue" description="Phosphoserine" evidence="1">
    <location>
        <position position="1767"/>
    </location>
</feature>
<feature type="modified residue" description="Phosphoserine" evidence="1">
    <location>
        <position position="1770"/>
    </location>
</feature>
<feature type="modified residue" description="Phosphoserine" evidence="22">
    <location>
        <position position="2064"/>
    </location>
</feature>
<feature type="modified residue" description="Phosphoserine" evidence="22">
    <location>
        <position position="2496"/>
    </location>
</feature>
<feature type="splice variant" id="VSP_038225" description="In isoform 2." evidence="12">
    <location>
        <begin position="2016"/>
        <end position="2026"/>
    </location>
</feature>
<feature type="splice variant" id="VSP_038226" description="In isoform 2." evidence="12">
    <location>
        <position position="2684"/>
    </location>
</feature>
<feature type="sequence variant" id="VAR_057605" description="In dbSNP:rs1782360." evidence="6">
    <original>A</original>
    <variation>G</variation>
    <location>
        <position position="1090"/>
    </location>
</feature>
<feature type="sequence variant" id="VAR_057606" description="In dbSNP:rs34708681.">
    <original>G</original>
    <variation>D</variation>
    <location>
        <position position="1230"/>
    </location>
</feature>
<feature type="sequence variant" id="VAR_057607" description="In dbSNP:rs17027133.">
    <original>N</original>
    <variation>S</variation>
    <location>
        <position position="1677"/>
    </location>
</feature>
<feature type="sequence variant" id="VAR_057608" description="In dbSNP:rs35879351.">
    <original>R</original>
    <variation>C</variation>
    <location>
        <position position="1997"/>
    </location>
</feature>
<feature type="sequence variant" id="VAR_035883" description="In a breast cancer sample; somatic mutation." evidence="7">
    <original>Q</original>
    <variation>H</variation>
    <location>
        <position position="2038"/>
    </location>
</feature>
<feature type="sequence variant" id="VAR_035884" description="In a breast cancer sample; somatic mutation." evidence="7">
    <original>G</original>
    <variation>R</variation>
    <location>
        <position position="2274"/>
    </location>
</feature>
<feature type="sequence variant" id="VAR_068690" description="In CVID8; dbSNP:rs199469663." evidence="8">
    <original>I</original>
    <variation>S</variation>
    <location>
        <position position="2657"/>
    </location>
</feature>
<feature type="sequence variant" id="VAR_035885" description="In a breast cancer sample; somatic mutation." evidence="7">
    <original>T</original>
    <variation>K</variation>
    <location>
        <position position="2701"/>
    </location>
</feature>
<feature type="sequence variant" id="VAR_057609" description="In dbSNP:rs3749574.">
    <original>A</original>
    <variation>T</variation>
    <location>
        <position position="2704"/>
    </location>
</feature>
<feature type="sequence variant" id="VAR_057610" description="In dbSNP:rs34662958.">
    <original>L</original>
    <variation>F</variation>
    <location>
        <position position="2713"/>
    </location>
</feature>
<feature type="sequence variant" id="VAR_022028" description="In dbSNP:rs2290846.">
    <original>S</original>
    <variation>L</variation>
    <location>
        <position position="2809"/>
    </location>
</feature>
<feature type="sequence conflict" description="In Ref. 2; AAM53530." evidence="15" ref="2">
    <original>F</original>
    <variation>L</variation>
    <location>
        <position position="377"/>
    </location>
</feature>
<feature type="sequence conflict" description="In Ref. 1; AAG48558." evidence="15" ref="1">
    <original>LA</original>
    <variation>RP</variation>
    <location>
        <begin position="750"/>
        <end position="751"/>
    </location>
</feature>
<feature type="sequence conflict" description="In Ref. 1; AAG48558 and 3; AAB09603." evidence="15" ref="1 3">
    <original>Y</original>
    <variation>F</variation>
    <location>
        <position position="2179"/>
    </location>
</feature>
<feature type="strand" evidence="24">
    <location>
        <begin position="2079"/>
        <end position="2087"/>
    </location>
</feature>
<feature type="strand" evidence="24">
    <location>
        <begin position="2092"/>
        <end position="2099"/>
    </location>
</feature>
<feature type="strand" evidence="24">
    <location>
        <begin position="2101"/>
        <end position="2108"/>
    </location>
</feature>
<feature type="helix" evidence="24">
    <location>
        <begin position="2113"/>
        <end position="2117"/>
    </location>
</feature>
<feature type="helix" evidence="24">
    <location>
        <begin position="2120"/>
        <end position="2125"/>
    </location>
</feature>
<feature type="strand" evidence="24">
    <location>
        <begin position="2132"/>
        <end position="2134"/>
    </location>
</feature>
<feature type="helix" evidence="24">
    <location>
        <begin position="2135"/>
        <end position="2137"/>
    </location>
</feature>
<feature type="strand" evidence="24">
    <location>
        <begin position="2138"/>
        <end position="2146"/>
    </location>
</feature>
<feature type="strand" evidence="24">
    <location>
        <begin position="2149"/>
        <end position="2157"/>
    </location>
</feature>
<feature type="strand" evidence="24">
    <location>
        <begin position="2162"/>
        <end position="2166"/>
    </location>
</feature>
<feature type="helix" evidence="24">
    <location>
        <begin position="2170"/>
        <end position="2179"/>
    </location>
</feature>
<feature type="turn" evidence="24">
    <location>
        <begin position="2195"/>
        <end position="2199"/>
    </location>
</feature>
<feature type="helix" evidence="24">
    <location>
        <begin position="2202"/>
        <end position="2208"/>
    </location>
</feature>
<feature type="helix" evidence="24">
    <location>
        <begin position="2211"/>
        <end position="2216"/>
    </location>
</feature>
<feature type="helix" evidence="24">
    <location>
        <begin position="2222"/>
        <end position="2233"/>
    </location>
</feature>
<feature type="helix" evidence="24">
    <location>
        <begin position="2240"/>
        <end position="2242"/>
    </location>
</feature>
<feature type="strand" evidence="24">
    <location>
        <begin position="2254"/>
        <end position="2257"/>
    </location>
</feature>
<feature type="helix" evidence="24">
    <location>
        <begin position="2263"/>
        <end position="2265"/>
    </location>
</feature>
<feature type="helix" evidence="24">
    <location>
        <begin position="2273"/>
        <end position="2276"/>
    </location>
</feature>
<feature type="helix" evidence="24">
    <location>
        <begin position="2278"/>
        <end position="2290"/>
    </location>
</feature>
<feature type="strand" evidence="24">
    <location>
        <begin position="2294"/>
        <end position="2296"/>
    </location>
</feature>
<feature type="strand" evidence="24">
    <location>
        <begin position="2300"/>
        <end position="2303"/>
    </location>
</feature>
<feature type="helix" evidence="24">
    <location>
        <begin position="2308"/>
        <end position="2315"/>
    </location>
</feature>
<feature type="helix" evidence="24">
    <location>
        <begin position="2321"/>
        <end position="2329"/>
    </location>
</feature>
<feature type="turn" evidence="24">
    <location>
        <begin position="2336"/>
        <end position="2338"/>
    </location>
</feature>
<feature type="helix" evidence="24">
    <location>
        <begin position="2343"/>
        <end position="2352"/>
    </location>
</feature>
<feature type="helix" evidence="24">
    <location>
        <begin position="2362"/>
        <end position="2365"/>
    </location>
</feature>
<feature type="helix" evidence="24">
    <location>
        <begin position="2368"/>
        <end position="2371"/>
    </location>
</feature>
<feature type="helix" evidence="24">
    <location>
        <begin position="2400"/>
        <end position="2412"/>
    </location>
</feature>
<feature type="helix" evidence="24">
    <location>
        <begin position="2414"/>
        <end position="2417"/>
    </location>
</feature>
<feature type="helix" evidence="24">
    <location>
        <begin position="2420"/>
        <end position="2427"/>
    </location>
</feature>
<feature type="helix" evidence="24">
    <location>
        <begin position="2434"/>
        <end position="2440"/>
    </location>
</feature>
<feature type="helix" evidence="24">
    <location>
        <begin position="2446"/>
        <end position="2448"/>
    </location>
</feature>
<feature type="helix" evidence="24">
    <location>
        <begin position="2455"/>
        <end position="2457"/>
    </location>
</feature>
<feature type="helix" evidence="24">
    <location>
        <begin position="2461"/>
        <end position="2474"/>
    </location>
</feature>
<keyword id="KW-0002">3D-structure</keyword>
<keyword id="KW-0007">Acetylation</keyword>
<keyword id="KW-0025">Alternative splicing</keyword>
<keyword id="KW-1003">Cell membrane</keyword>
<keyword id="KW-0175">Coiled coil</keyword>
<keyword id="KW-0225">Disease variant</keyword>
<keyword id="KW-0256">Endoplasmic reticulum</keyword>
<keyword id="KW-0333">Golgi apparatus</keyword>
<keyword id="KW-0458">Lysosome</keyword>
<keyword id="KW-0472">Membrane</keyword>
<keyword id="KW-0597">Phosphoprotein</keyword>
<keyword id="KW-1267">Proteomics identification</keyword>
<keyword id="KW-1185">Reference proteome</keyword>
<keyword id="KW-0677">Repeat</keyword>
<keyword id="KW-0812">Transmembrane</keyword>
<keyword id="KW-1133">Transmembrane helix</keyword>
<keyword id="KW-0853">WD repeat</keyword>